<comment type="function">
    <text evidence="1">Binds to 23S rRNA. Forms part of two intersubunit bridges in the 70S ribosome.</text>
</comment>
<comment type="subunit">
    <text evidence="1">Part of the 50S ribosomal subunit. Forms a cluster with proteins L3 and L24e, part of which may contact the 16S rRNA in 2 intersubunit bridges.</text>
</comment>
<comment type="similarity">
    <text evidence="1">Belongs to the universal ribosomal protein uL14 family.</text>
</comment>
<reference key="1">
    <citation type="journal article" date="2003" name="Mol. Microbiol.">
        <title>An integrated analysis of the genome of the hyperthermophilic archaeon Pyrococcus abyssi.</title>
        <authorList>
            <person name="Cohen G.N."/>
            <person name="Barbe V."/>
            <person name="Flament D."/>
            <person name="Galperin M."/>
            <person name="Heilig R."/>
            <person name="Lecompte O."/>
            <person name="Poch O."/>
            <person name="Prieur D."/>
            <person name="Querellou J."/>
            <person name="Ripp R."/>
            <person name="Thierry J.-C."/>
            <person name="Van der Oost J."/>
            <person name="Weissenbach J."/>
            <person name="Zivanovic Y."/>
            <person name="Forterre P."/>
        </authorList>
    </citation>
    <scope>NUCLEOTIDE SEQUENCE [LARGE SCALE GENOMIC DNA]</scope>
    <source>
        <strain>GE5 / Orsay</strain>
    </source>
</reference>
<reference key="2">
    <citation type="journal article" date="2012" name="Curr. Microbiol.">
        <title>Re-annotation of two hyperthermophilic archaea Pyrococcus abyssi GE5 and Pyrococcus furiosus DSM 3638.</title>
        <authorList>
            <person name="Gao J."/>
            <person name="Wang J."/>
        </authorList>
    </citation>
    <scope>GENOME REANNOTATION</scope>
    <source>
        <strain>GE5 / Orsay</strain>
    </source>
</reference>
<dbReference type="EMBL" id="AJ248284">
    <property type="protein sequence ID" value="CAB49253.1"/>
    <property type="molecule type" value="Genomic_DNA"/>
</dbReference>
<dbReference type="EMBL" id="HE613800">
    <property type="protein sequence ID" value="CCE69708.1"/>
    <property type="molecule type" value="Genomic_DNA"/>
</dbReference>
<dbReference type="PIR" id="F75146">
    <property type="entry name" value="F75146"/>
</dbReference>
<dbReference type="RefSeq" id="WP_010867453.1">
    <property type="nucleotide sequence ID" value="NC_000868.1"/>
</dbReference>
<dbReference type="SMR" id="Q9V1U6"/>
<dbReference type="STRING" id="272844.PAB2436"/>
<dbReference type="KEGG" id="pab:PAB2436"/>
<dbReference type="PATRIC" id="fig|272844.11.peg.352"/>
<dbReference type="eggNOG" id="arCOG04095">
    <property type="taxonomic scope" value="Archaea"/>
</dbReference>
<dbReference type="HOGENOM" id="CLU_095071_3_0_2"/>
<dbReference type="OrthoDB" id="23569at2157"/>
<dbReference type="PhylomeDB" id="Q9V1U6"/>
<dbReference type="Proteomes" id="UP000000810">
    <property type="component" value="Chromosome"/>
</dbReference>
<dbReference type="Proteomes" id="UP000009139">
    <property type="component" value="Chromosome"/>
</dbReference>
<dbReference type="GO" id="GO:0022625">
    <property type="term" value="C:cytosolic large ribosomal subunit"/>
    <property type="evidence" value="ECO:0007669"/>
    <property type="project" value="TreeGrafter"/>
</dbReference>
<dbReference type="GO" id="GO:0070180">
    <property type="term" value="F:large ribosomal subunit rRNA binding"/>
    <property type="evidence" value="ECO:0007669"/>
    <property type="project" value="TreeGrafter"/>
</dbReference>
<dbReference type="GO" id="GO:0003735">
    <property type="term" value="F:structural constituent of ribosome"/>
    <property type="evidence" value="ECO:0007669"/>
    <property type="project" value="InterPro"/>
</dbReference>
<dbReference type="GO" id="GO:0006412">
    <property type="term" value="P:translation"/>
    <property type="evidence" value="ECO:0007669"/>
    <property type="project" value="UniProtKB-UniRule"/>
</dbReference>
<dbReference type="CDD" id="cd00337">
    <property type="entry name" value="Ribosomal_uL14"/>
    <property type="match status" value="1"/>
</dbReference>
<dbReference type="FunFam" id="2.40.150.20:FF:000007">
    <property type="entry name" value="50S ribosomal protein L14"/>
    <property type="match status" value="1"/>
</dbReference>
<dbReference type="Gene3D" id="2.40.150.20">
    <property type="entry name" value="Ribosomal protein L14"/>
    <property type="match status" value="1"/>
</dbReference>
<dbReference type="HAMAP" id="MF_01367">
    <property type="entry name" value="Ribosomal_uL14"/>
    <property type="match status" value="1"/>
</dbReference>
<dbReference type="InterPro" id="IPR000218">
    <property type="entry name" value="Ribosomal_uL14"/>
</dbReference>
<dbReference type="InterPro" id="IPR019971">
    <property type="entry name" value="Ribosomal_uL14_arc"/>
</dbReference>
<dbReference type="InterPro" id="IPR019972">
    <property type="entry name" value="Ribosomal_uL14_CS"/>
</dbReference>
<dbReference type="InterPro" id="IPR036853">
    <property type="entry name" value="Ribosomal_uL14_sf"/>
</dbReference>
<dbReference type="NCBIfam" id="NF006344">
    <property type="entry name" value="PRK08571.1"/>
    <property type="match status" value="1"/>
</dbReference>
<dbReference type="NCBIfam" id="TIGR03673">
    <property type="entry name" value="uL14_arch"/>
    <property type="match status" value="1"/>
</dbReference>
<dbReference type="PANTHER" id="PTHR11761">
    <property type="entry name" value="50S/60S RIBOSOMAL PROTEIN L14/L23"/>
    <property type="match status" value="1"/>
</dbReference>
<dbReference type="PANTHER" id="PTHR11761:SF8">
    <property type="entry name" value="LARGE RIBOSOMAL SUBUNIT PROTEIN UL14"/>
    <property type="match status" value="1"/>
</dbReference>
<dbReference type="Pfam" id="PF00238">
    <property type="entry name" value="Ribosomal_L14"/>
    <property type="match status" value="1"/>
</dbReference>
<dbReference type="SMART" id="SM01374">
    <property type="entry name" value="Ribosomal_L14"/>
    <property type="match status" value="1"/>
</dbReference>
<dbReference type="SUPFAM" id="SSF50193">
    <property type="entry name" value="Ribosomal protein L14"/>
    <property type="match status" value="1"/>
</dbReference>
<dbReference type="PROSITE" id="PS00049">
    <property type="entry name" value="RIBOSOMAL_L14"/>
    <property type="match status" value="1"/>
</dbReference>
<gene>
    <name evidence="1" type="primary">rpl14</name>
    <name type="ordered locus">PYRAB03310</name>
    <name type="ORF">PAB2436</name>
</gene>
<protein>
    <recommendedName>
        <fullName evidence="1">Large ribosomal subunit protein uL14</fullName>
    </recommendedName>
    <alternativeName>
        <fullName evidence="2">50S ribosomal protein L14</fullName>
    </alternativeName>
</protein>
<accession>Q9V1U6</accession>
<accession>G8ZHW5</accession>
<evidence type="ECO:0000255" key="1">
    <source>
        <dbReference type="HAMAP-Rule" id="MF_01367"/>
    </source>
</evidence>
<evidence type="ECO:0000305" key="2"/>
<keyword id="KW-0687">Ribonucleoprotein</keyword>
<keyword id="KW-0689">Ribosomal protein</keyword>
<keyword id="KW-0694">RNA-binding</keyword>
<keyword id="KW-0699">rRNA-binding</keyword>
<proteinExistence type="inferred from homology"/>
<organism>
    <name type="scientific">Pyrococcus abyssi (strain GE5 / Orsay)</name>
    <dbReference type="NCBI Taxonomy" id="272844"/>
    <lineage>
        <taxon>Archaea</taxon>
        <taxon>Methanobacteriati</taxon>
        <taxon>Methanobacteriota</taxon>
        <taxon>Thermococci</taxon>
        <taxon>Thermococcales</taxon>
        <taxon>Thermococcaceae</taxon>
        <taxon>Pyrococcus</taxon>
    </lineage>
</organism>
<feature type="chain" id="PRO_0000128576" description="Large ribosomal subunit protein uL14">
    <location>
        <begin position="1"/>
        <end position="141"/>
    </location>
</feature>
<sequence length="141" mass="15291">MAKKGAGATRGITPVRPTRAIPVGAYLTVADNSGAKVIQVIGVVEYHGTRRRLASAGVGDMVVATVKKGRPDMRHQVVRAVIIRQRKEYRRLDGMRIKFEDNAAVIVTPEGVPRGTEIRGPVAREAAERWVRIGSIASIIV</sequence>
<name>RL14_PYRAB</name>